<feature type="chain" id="PRO_1000214260" description="Small ribosomal subunit protein uS8">
    <location>
        <begin position="1"/>
        <end position="130"/>
    </location>
</feature>
<dbReference type="EMBL" id="CP001657">
    <property type="protein sequence ID" value="ACT14823.1"/>
    <property type="molecule type" value="Genomic_DNA"/>
</dbReference>
<dbReference type="RefSeq" id="WP_005970261.1">
    <property type="nucleotide sequence ID" value="NC_012917.1"/>
</dbReference>
<dbReference type="SMR" id="C6DG60"/>
<dbReference type="STRING" id="561230.PC1_3808"/>
<dbReference type="GeneID" id="93391966"/>
<dbReference type="KEGG" id="pct:PC1_3808"/>
<dbReference type="eggNOG" id="COG0096">
    <property type="taxonomic scope" value="Bacteria"/>
</dbReference>
<dbReference type="HOGENOM" id="CLU_098428_0_0_6"/>
<dbReference type="OrthoDB" id="9802617at2"/>
<dbReference type="Proteomes" id="UP000002736">
    <property type="component" value="Chromosome"/>
</dbReference>
<dbReference type="GO" id="GO:1990904">
    <property type="term" value="C:ribonucleoprotein complex"/>
    <property type="evidence" value="ECO:0007669"/>
    <property type="project" value="UniProtKB-KW"/>
</dbReference>
<dbReference type="GO" id="GO:0005840">
    <property type="term" value="C:ribosome"/>
    <property type="evidence" value="ECO:0007669"/>
    <property type="project" value="UniProtKB-KW"/>
</dbReference>
<dbReference type="GO" id="GO:0019843">
    <property type="term" value="F:rRNA binding"/>
    <property type="evidence" value="ECO:0007669"/>
    <property type="project" value="UniProtKB-UniRule"/>
</dbReference>
<dbReference type="GO" id="GO:0003735">
    <property type="term" value="F:structural constituent of ribosome"/>
    <property type="evidence" value="ECO:0007669"/>
    <property type="project" value="InterPro"/>
</dbReference>
<dbReference type="GO" id="GO:0006412">
    <property type="term" value="P:translation"/>
    <property type="evidence" value="ECO:0007669"/>
    <property type="project" value="UniProtKB-UniRule"/>
</dbReference>
<dbReference type="FunFam" id="3.30.1370.30:FF:000003">
    <property type="entry name" value="30S ribosomal protein S8"/>
    <property type="match status" value="1"/>
</dbReference>
<dbReference type="FunFam" id="3.30.1490.10:FF:000001">
    <property type="entry name" value="30S ribosomal protein S8"/>
    <property type="match status" value="1"/>
</dbReference>
<dbReference type="Gene3D" id="3.30.1370.30">
    <property type="match status" value="1"/>
</dbReference>
<dbReference type="Gene3D" id="3.30.1490.10">
    <property type="match status" value="1"/>
</dbReference>
<dbReference type="HAMAP" id="MF_01302_B">
    <property type="entry name" value="Ribosomal_uS8_B"/>
    <property type="match status" value="1"/>
</dbReference>
<dbReference type="InterPro" id="IPR000630">
    <property type="entry name" value="Ribosomal_uS8"/>
</dbReference>
<dbReference type="InterPro" id="IPR047863">
    <property type="entry name" value="Ribosomal_uS8_CS"/>
</dbReference>
<dbReference type="InterPro" id="IPR035987">
    <property type="entry name" value="Ribosomal_uS8_sf"/>
</dbReference>
<dbReference type="NCBIfam" id="NF001109">
    <property type="entry name" value="PRK00136.1"/>
    <property type="match status" value="1"/>
</dbReference>
<dbReference type="PANTHER" id="PTHR11758">
    <property type="entry name" value="40S RIBOSOMAL PROTEIN S15A"/>
    <property type="match status" value="1"/>
</dbReference>
<dbReference type="Pfam" id="PF00410">
    <property type="entry name" value="Ribosomal_S8"/>
    <property type="match status" value="1"/>
</dbReference>
<dbReference type="SUPFAM" id="SSF56047">
    <property type="entry name" value="Ribosomal protein S8"/>
    <property type="match status" value="1"/>
</dbReference>
<dbReference type="PROSITE" id="PS00053">
    <property type="entry name" value="RIBOSOMAL_S8"/>
    <property type="match status" value="1"/>
</dbReference>
<comment type="function">
    <text evidence="1">One of the primary rRNA binding proteins, it binds directly to 16S rRNA central domain where it helps coordinate assembly of the platform of the 30S subunit.</text>
</comment>
<comment type="subunit">
    <text evidence="1">Part of the 30S ribosomal subunit. Contacts proteins S5 and S12.</text>
</comment>
<comment type="similarity">
    <text evidence="1">Belongs to the universal ribosomal protein uS8 family.</text>
</comment>
<name>RS8_PECCP</name>
<reference key="1">
    <citation type="submission" date="2009-07" db="EMBL/GenBank/DDBJ databases">
        <title>Complete sequence of Pectobacterium carotovorum subsp. carotovorum PC1.</title>
        <authorList>
            <consortium name="US DOE Joint Genome Institute"/>
            <person name="Lucas S."/>
            <person name="Copeland A."/>
            <person name="Lapidus A."/>
            <person name="Glavina del Rio T."/>
            <person name="Tice H."/>
            <person name="Bruce D."/>
            <person name="Goodwin L."/>
            <person name="Pitluck S."/>
            <person name="Munk A.C."/>
            <person name="Brettin T."/>
            <person name="Detter J.C."/>
            <person name="Han C."/>
            <person name="Tapia R."/>
            <person name="Larimer F."/>
            <person name="Land M."/>
            <person name="Hauser L."/>
            <person name="Kyrpides N."/>
            <person name="Mikhailova N."/>
            <person name="Balakrishnan V."/>
            <person name="Glasner J."/>
            <person name="Perna N.T."/>
        </authorList>
    </citation>
    <scope>NUCLEOTIDE SEQUENCE [LARGE SCALE GENOMIC DNA]</scope>
    <source>
        <strain>PC1</strain>
    </source>
</reference>
<accession>C6DG60</accession>
<protein>
    <recommendedName>
        <fullName evidence="1">Small ribosomal subunit protein uS8</fullName>
    </recommendedName>
    <alternativeName>
        <fullName evidence="2">30S ribosomal protein S8</fullName>
    </alternativeName>
</protein>
<sequence length="130" mass="14183">MSMQDPIADMLTRIRNGQAANKVAVTMPSSKLKVAIANVLKEEGYIEDFKIEGDTKPVLELELKYFQGKAVVESIQRVSRPGLRIYKRKDELPKVMAGLGIAVVSTSKGVMTDRAARQAGLGGEIICYVA</sequence>
<keyword id="KW-0687">Ribonucleoprotein</keyword>
<keyword id="KW-0689">Ribosomal protein</keyword>
<keyword id="KW-0694">RNA-binding</keyword>
<keyword id="KW-0699">rRNA-binding</keyword>
<gene>
    <name evidence="1" type="primary">rpsH</name>
    <name type="ordered locus">PC1_3808</name>
</gene>
<proteinExistence type="inferred from homology"/>
<organism>
    <name type="scientific">Pectobacterium carotovorum subsp. carotovorum (strain PC1)</name>
    <dbReference type="NCBI Taxonomy" id="561230"/>
    <lineage>
        <taxon>Bacteria</taxon>
        <taxon>Pseudomonadati</taxon>
        <taxon>Pseudomonadota</taxon>
        <taxon>Gammaproteobacteria</taxon>
        <taxon>Enterobacterales</taxon>
        <taxon>Pectobacteriaceae</taxon>
        <taxon>Pectobacterium</taxon>
    </lineage>
</organism>
<evidence type="ECO:0000255" key="1">
    <source>
        <dbReference type="HAMAP-Rule" id="MF_01302"/>
    </source>
</evidence>
<evidence type="ECO:0000305" key="2"/>